<feature type="signal peptide" evidence="2">
    <location>
        <begin position="1"/>
        <end position="23"/>
    </location>
</feature>
<feature type="chain" id="PRO_0000007656" description="Matrilin-2">
    <location>
        <begin position="24"/>
        <end position="956"/>
    </location>
</feature>
<feature type="domain" description="VWFA 1" evidence="3">
    <location>
        <begin position="57"/>
        <end position="232"/>
    </location>
</feature>
<feature type="domain" description="EGF-like 1">
    <location>
        <begin position="238"/>
        <end position="278"/>
    </location>
</feature>
<feature type="domain" description="EGF-like 2">
    <location>
        <begin position="279"/>
        <end position="319"/>
    </location>
</feature>
<feature type="domain" description="EGF-like 3">
    <location>
        <begin position="320"/>
        <end position="360"/>
    </location>
</feature>
<feature type="domain" description="EGF-like 4">
    <location>
        <begin position="361"/>
        <end position="401"/>
    </location>
</feature>
<feature type="domain" description="EGF-like 5">
    <location>
        <begin position="402"/>
        <end position="442"/>
    </location>
</feature>
<feature type="domain" description="EGF-like 6">
    <location>
        <begin position="443"/>
        <end position="483"/>
    </location>
</feature>
<feature type="domain" description="EGF-like 7">
    <location>
        <begin position="484"/>
        <end position="524"/>
    </location>
</feature>
<feature type="domain" description="EGF-like 8">
    <location>
        <begin position="525"/>
        <end position="565"/>
    </location>
</feature>
<feature type="domain" description="EGF-like 9">
    <location>
        <begin position="566"/>
        <end position="606"/>
    </location>
</feature>
<feature type="domain" description="EGF-like 10">
    <location>
        <begin position="607"/>
        <end position="647"/>
    </location>
</feature>
<feature type="domain" description="VWFA 2" evidence="3">
    <location>
        <begin position="655"/>
        <end position="830"/>
    </location>
</feature>
<feature type="coiled-coil region" evidence="2">
    <location>
        <begin position="917"/>
        <end position="955"/>
    </location>
</feature>
<feature type="glycosylation site" description="N-linked (GlcNAc...) asparagine" evidence="2">
    <location>
        <position position="221"/>
    </location>
</feature>
<feature type="glycosylation site" description="N-linked (GlcNAc...) asparagine" evidence="2">
    <location>
        <position position="890"/>
    </location>
</feature>
<feature type="disulfide bond" evidence="1">
    <location>
        <begin position="242"/>
        <end position="253"/>
    </location>
</feature>
<feature type="disulfide bond" evidence="1">
    <location>
        <begin position="249"/>
        <end position="262"/>
    </location>
</feature>
<feature type="disulfide bond" evidence="1">
    <location>
        <begin position="264"/>
        <end position="277"/>
    </location>
</feature>
<feature type="disulfide bond" evidence="1">
    <location>
        <begin position="283"/>
        <end position="294"/>
    </location>
</feature>
<feature type="disulfide bond" evidence="1">
    <location>
        <begin position="290"/>
        <end position="303"/>
    </location>
</feature>
<feature type="disulfide bond" evidence="1">
    <location>
        <begin position="305"/>
        <end position="318"/>
    </location>
</feature>
<feature type="disulfide bond" evidence="1">
    <location>
        <begin position="324"/>
        <end position="335"/>
    </location>
</feature>
<feature type="disulfide bond" evidence="1">
    <location>
        <begin position="331"/>
        <end position="344"/>
    </location>
</feature>
<feature type="disulfide bond" evidence="1">
    <location>
        <begin position="346"/>
        <end position="359"/>
    </location>
</feature>
<feature type="disulfide bond" evidence="1">
    <location>
        <begin position="365"/>
        <end position="376"/>
    </location>
</feature>
<feature type="disulfide bond" evidence="1">
    <location>
        <begin position="372"/>
        <end position="385"/>
    </location>
</feature>
<feature type="disulfide bond" evidence="1">
    <location>
        <begin position="387"/>
        <end position="400"/>
    </location>
</feature>
<feature type="disulfide bond" evidence="1">
    <location>
        <begin position="406"/>
        <end position="417"/>
    </location>
</feature>
<feature type="disulfide bond" evidence="1">
    <location>
        <begin position="413"/>
        <end position="426"/>
    </location>
</feature>
<feature type="disulfide bond" evidence="1">
    <location>
        <begin position="428"/>
        <end position="441"/>
    </location>
</feature>
<feature type="disulfide bond" evidence="1">
    <location>
        <begin position="447"/>
        <end position="458"/>
    </location>
</feature>
<feature type="disulfide bond" evidence="1">
    <location>
        <begin position="454"/>
        <end position="467"/>
    </location>
</feature>
<feature type="disulfide bond" evidence="1">
    <location>
        <begin position="469"/>
        <end position="482"/>
    </location>
</feature>
<feature type="disulfide bond" evidence="1">
    <location>
        <begin position="488"/>
        <end position="499"/>
    </location>
</feature>
<feature type="disulfide bond" evidence="1">
    <location>
        <begin position="495"/>
        <end position="508"/>
    </location>
</feature>
<feature type="disulfide bond" evidence="1">
    <location>
        <begin position="510"/>
        <end position="523"/>
    </location>
</feature>
<feature type="disulfide bond" evidence="1">
    <location>
        <begin position="529"/>
        <end position="540"/>
    </location>
</feature>
<feature type="disulfide bond" evidence="1">
    <location>
        <begin position="536"/>
        <end position="549"/>
    </location>
</feature>
<feature type="disulfide bond" evidence="1">
    <location>
        <begin position="551"/>
        <end position="564"/>
    </location>
</feature>
<feature type="disulfide bond" evidence="1">
    <location>
        <begin position="570"/>
        <end position="581"/>
    </location>
</feature>
<feature type="disulfide bond" evidence="1">
    <location>
        <begin position="577"/>
        <end position="590"/>
    </location>
</feature>
<feature type="disulfide bond" evidence="1">
    <location>
        <begin position="592"/>
        <end position="605"/>
    </location>
</feature>
<feature type="disulfide bond" evidence="1">
    <location>
        <begin position="611"/>
        <end position="622"/>
    </location>
</feature>
<feature type="disulfide bond" evidence="1">
    <location>
        <begin position="618"/>
        <end position="631"/>
    </location>
</feature>
<feature type="disulfide bond" evidence="1">
    <location>
        <begin position="633"/>
        <end position="646"/>
    </location>
</feature>
<feature type="splice variant" id="VSP_041771" description="In isoform 2." evidence="4">
    <location>
        <begin position="861"/>
        <end position="879"/>
    </location>
</feature>
<feature type="sequence conflict" description="In Ref. 1; AAC53163." evidence="4" ref="1">
    <original>V</original>
    <variation>M</variation>
    <location>
        <position position="321"/>
    </location>
</feature>
<evidence type="ECO:0000250" key="1"/>
<evidence type="ECO:0000255" key="2"/>
<evidence type="ECO:0000255" key="3">
    <source>
        <dbReference type="PROSITE-ProRule" id="PRU00219"/>
    </source>
</evidence>
<evidence type="ECO:0000305" key="4"/>
<sequence length="956" mass="106748">MEKMLVGCLLMLGQLFLVLPVDGRERPQARFPSRGRHVRMYPQTALLESSCENKRADLVFIIDSSRSVNTYDYAKVKEFILDILQFLDIGPDVTRVGLLQYGSTVKNEFSLKTFKRKSEVERAVKRMRHLSTGTMTGLAIQYALNIAFSEAEGARPLRENVPRIIMIVTDGRPQDSVAEVAAKARNTGILIFAIGVGQVDLNTLKAIGSEPHKDHVFLVANFSQIESLTSVFQNKLCTVHMCSVLEHNCAHFCLNTPGSYICKCKQGYILSTDQKTCRIQDLCATEDHGCEQLCVNMLGSFVCQCYSGYTLAEDGKRCTAVDYCASENHGCEHECVNAESSYLCRCHEGFALNSDKKTCSKIDYCASSNHGCQHECVNAQTSALCRCLKGFMLNPDRKTCRRINYCALNKPGCEHECVNTEEGHYCRCRQGYNLDPNGKTCSRVDHCAQQDHGCEQLCLNTEESFVCQCSEGFLINDDLKTCSRADYCLLSNHGCEYSCVNTDKSFACQCPEGHVLRSDGKTCAKLDSCALGDHGCEHSCVSSEDSFVCQCFEGYILRDDGKTCRRKDVCQDVNHGCEHLCVNSGESYVCKCLEGFRLAEDGKRCRRKNVCKSTQHGCEHMCVNNGNSYLCRCSEGFVLAEDGKHCKRCTEGPIDLVFVIDGSKSLGEENFETVKHFVTGIIDSLAVSPKAARVGLLQYSTQVRTEFTLRGFSSAKEMKKAVTHMKYMGKGSMTGLALKHMFERSFTQVEGARPPSTQVPRVAIVFTDGRAQDDVSEWASKAKANGITMYAVGVGKAIEEELQEIASEPIDKHLFYAEDFSTMGEISEKLKEGICEALEDSGGRQDSAAWDLPQQAHQPTEPEPVTIKIKDLLSCSNFAVQHRFLFEEDNLSRSTQKLFHSTKSSGNPLEESQDQCKCENLILFQNVANEEVRKLTQRLEEMTQRMEALENRLKYR</sequence>
<gene>
    <name type="primary">Matn2</name>
</gene>
<protein>
    <recommendedName>
        <fullName>Matrilin-2</fullName>
    </recommendedName>
</protein>
<reference key="1">
    <citation type="journal article" date="1997" name="J. Biol. Chem.">
        <title>Primary structure and expression of matrilin-2, the closest relative of cartilage matrix protein within the von Willebrand factor type A-like module superfamily.</title>
        <authorList>
            <person name="Deak F."/>
            <person name="Piecha D."/>
            <person name="Bachrati C."/>
            <person name="Paulsson M."/>
            <person name="Kiss I."/>
        </authorList>
    </citation>
    <scope>NUCLEOTIDE SEQUENCE [MRNA] (ISOFORM 1)</scope>
    <source>
        <strain>BALB/cJ</strain>
        <tissue>Limb</tissue>
    </source>
</reference>
<reference key="2">
    <citation type="journal article" date="2002" name="Matrix Biol.">
        <title>Comparative analysis of the mouse and human genes (Matn2 and MATN2) for matrilin-2, a filament-forming protein widely distributed in extracellular matrices.</title>
        <authorList>
            <person name="Mates L."/>
            <person name="Korpos E."/>
            <person name="Deak F."/>
            <person name="Liu Z."/>
            <person name="Beier D.R."/>
            <person name="Aszodi A."/>
            <person name="Kiss I."/>
        </authorList>
    </citation>
    <scope>NUCLEOTIDE SEQUENCE [GENOMIC DNA]</scope>
    <scope>ALTERNATIVE SPLICING</scope>
    <source>
        <strain>129/Sv</strain>
    </source>
</reference>
<reference key="3">
    <citation type="journal article" date="2009" name="PLoS Biol.">
        <title>Lineage-specific biology revealed by a finished genome assembly of the mouse.</title>
        <authorList>
            <person name="Church D.M."/>
            <person name="Goodstadt L."/>
            <person name="Hillier L.W."/>
            <person name="Zody M.C."/>
            <person name="Goldstein S."/>
            <person name="She X."/>
            <person name="Bult C.J."/>
            <person name="Agarwala R."/>
            <person name="Cherry J.L."/>
            <person name="DiCuccio M."/>
            <person name="Hlavina W."/>
            <person name="Kapustin Y."/>
            <person name="Meric P."/>
            <person name="Maglott D."/>
            <person name="Birtle Z."/>
            <person name="Marques A.C."/>
            <person name="Graves T."/>
            <person name="Zhou S."/>
            <person name="Teague B."/>
            <person name="Potamousis K."/>
            <person name="Churas C."/>
            <person name="Place M."/>
            <person name="Herschleb J."/>
            <person name="Runnheim R."/>
            <person name="Forrest D."/>
            <person name="Amos-Landgraf J."/>
            <person name="Schwartz D.C."/>
            <person name="Cheng Z."/>
            <person name="Lindblad-Toh K."/>
            <person name="Eichler E.E."/>
            <person name="Ponting C.P."/>
        </authorList>
    </citation>
    <scope>NUCLEOTIDE SEQUENCE [LARGE SCALE GENOMIC DNA]</scope>
    <source>
        <strain>C57BL/6J</strain>
    </source>
</reference>
<accession>O08746</accession>
<accession>E9QPK9</accession>
<accession>Q8R542</accession>
<keyword id="KW-0025">Alternative splicing</keyword>
<keyword id="KW-0175">Coiled coil</keyword>
<keyword id="KW-1015">Disulfide bond</keyword>
<keyword id="KW-0245">EGF-like domain</keyword>
<keyword id="KW-0325">Glycoprotein</keyword>
<keyword id="KW-1185">Reference proteome</keyword>
<keyword id="KW-0677">Repeat</keyword>
<keyword id="KW-0964">Secreted</keyword>
<keyword id="KW-0732">Signal</keyword>
<comment type="function">
    <text evidence="1">Involved in matrix assembly.</text>
</comment>
<comment type="subcellular location">
    <subcellularLocation>
        <location>Secreted</location>
    </subcellularLocation>
</comment>
<comment type="alternative products">
    <event type="alternative splicing"/>
    <isoform>
        <id>O08746-1</id>
        <name>1</name>
        <sequence type="displayed"/>
    </isoform>
    <isoform>
        <id>O08746-2</id>
        <name>2</name>
        <sequence type="described" ref="VSP_041771"/>
    </isoform>
</comment>
<comment type="tissue specificity">
    <text>Detected in a variety of organs, including calvaria, uterus, heart and brain, as well as fibroblast and osteoblast cell lines.</text>
</comment>
<dbReference type="EMBL" id="U69262">
    <property type="protein sequence ID" value="AAC53163.1"/>
    <property type="molecule type" value="mRNA"/>
</dbReference>
<dbReference type="EMBL" id="AF358844">
    <property type="protein sequence ID" value="AAM11539.1"/>
    <property type="molecule type" value="Genomic_DNA"/>
</dbReference>
<dbReference type="EMBL" id="AF358831">
    <property type="protein sequence ID" value="AAM11539.1"/>
    <property type="status" value="JOINED"/>
    <property type="molecule type" value="Genomic_DNA"/>
</dbReference>
<dbReference type="EMBL" id="AF358832">
    <property type="protein sequence ID" value="AAM11539.1"/>
    <property type="status" value="JOINED"/>
    <property type="molecule type" value="Genomic_DNA"/>
</dbReference>
<dbReference type="EMBL" id="AF358833">
    <property type="protein sequence ID" value="AAM11539.1"/>
    <property type="status" value="JOINED"/>
    <property type="molecule type" value="Genomic_DNA"/>
</dbReference>
<dbReference type="EMBL" id="AF358834">
    <property type="protein sequence ID" value="AAM11539.1"/>
    <property type="status" value="JOINED"/>
    <property type="molecule type" value="Genomic_DNA"/>
</dbReference>
<dbReference type="EMBL" id="AF358835">
    <property type="protein sequence ID" value="AAM11539.1"/>
    <property type="status" value="JOINED"/>
    <property type="molecule type" value="Genomic_DNA"/>
</dbReference>
<dbReference type="EMBL" id="AF358836">
    <property type="protein sequence ID" value="AAM11539.1"/>
    <property type="status" value="JOINED"/>
    <property type="molecule type" value="Genomic_DNA"/>
</dbReference>
<dbReference type="EMBL" id="AF358837">
    <property type="protein sequence ID" value="AAM11539.1"/>
    <property type="status" value="JOINED"/>
    <property type="molecule type" value="Genomic_DNA"/>
</dbReference>
<dbReference type="EMBL" id="AF358838">
    <property type="protein sequence ID" value="AAM11539.1"/>
    <property type="status" value="JOINED"/>
    <property type="molecule type" value="Genomic_DNA"/>
</dbReference>
<dbReference type="EMBL" id="AF358839">
    <property type="protein sequence ID" value="AAM11539.1"/>
    <property type="status" value="JOINED"/>
    <property type="molecule type" value="Genomic_DNA"/>
</dbReference>
<dbReference type="EMBL" id="AF358840">
    <property type="protein sequence ID" value="AAM11539.1"/>
    <property type="status" value="JOINED"/>
    <property type="molecule type" value="Genomic_DNA"/>
</dbReference>
<dbReference type="EMBL" id="AF358841">
    <property type="protein sequence ID" value="AAM11539.1"/>
    <property type="status" value="JOINED"/>
    <property type="molecule type" value="Genomic_DNA"/>
</dbReference>
<dbReference type="EMBL" id="AF358842">
    <property type="protein sequence ID" value="AAM11539.1"/>
    <property type="status" value="JOINED"/>
    <property type="molecule type" value="Genomic_DNA"/>
</dbReference>
<dbReference type="EMBL" id="AF358843">
    <property type="protein sequence ID" value="AAM11539.1"/>
    <property type="status" value="JOINED"/>
    <property type="molecule type" value="Genomic_DNA"/>
</dbReference>
<dbReference type="EMBL" id="AC126028">
    <property type="status" value="NOT_ANNOTATED_CDS"/>
    <property type="molecule type" value="Genomic_DNA"/>
</dbReference>
<dbReference type="EMBL" id="AC133101">
    <property type="status" value="NOT_ANNOTATED_CDS"/>
    <property type="molecule type" value="Genomic_DNA"/>
</dbReference>
<dbReference type="EMBL" id="AC144632">
    <property type="status" value="NOT_ANNOTATED_CDS"/>
    <property type="molecule type" value="Genomic_DNA"/>
</dbReference>
<dbReference type="CCDS" id="CCDS37056.1">
    <molecule id="O08746-2"/>
</dbReference>
<dbReference type="CCDS" id="CCDS88747.1">
    <molecule id="O08746-1"/>
</dbReference>
<dbReference type="RefSeq" id="NP_001345709.1">
    <molecule id="O08746-1"/>
    <property type="nucleotide sequence ID" value="NM_001358780.1"/>
</dbReference>
<dbReference type="RefSeq" id="NP_058042.2">
    <molecule id="O08746-2"/>
    <property type="nucleotide sequence ID" value="NM_016762.2"/>
</dbReference>
<dbReference type="RefSeq" id="XP_006520086.1">
    <property type="nucleotide sequence ID" value="XM_006520023.2"/>
</dbReference>
<dbReference type="SMR" id="O08746"/>
<dbReference type="BioGRID" id="201321">
    <property type="interactions" value="7"/>
</dbReference>
<dbReference type="ComplexPortal" id="CPX-4467">
    <property type="entry name" value="Matrilin-2 complex"/>
</dbReference>
<dbReference type="FunCoup" id="O08746">
    <property type="interactions" value="106"/>
</dbReference>
<dbReference type="IntAct" id="O08746">
    <property type="interactions" value="2"/>
</dbReference>
<dbReference type="STRING" id="10090.ENSMUSP00000022947"/>
<dbReference type="GlyCosmos" id="O08746">
    <property type="glycosylation" value="2 sites, No reported glycans"/>
</dbReference>
<dbReference type="GlyGen" id="O08746">
    <property type="glycosylation" value="2 sites"/>
</dbReference>
<dbReference type="iPTMnet" id="O08746"/>
<dbReference type="PhosphoSitePlus" id="O08746"/>
<dbReference type="PaxDb" id="10090-ENSMUSP00000128202"/>
<dbReference type="PeptideAtlas" id="O08746"/>
<dbReference type="ProteomicsDB" id="287316">
    <molecule id="O08746-1"/>
</dbReference>
<dbReference type="ProteomicsDB" id="287317">
    <molecule id="O08746-2"/>
</dbReference>
<dbReference type="Pumba" id="O08746"/>
<dbReference type="Antibodypedia" id="26033">
    <property type="antibodies" value="178 antibodies from 33 providers"/>
</dbReference>
<dbReference type="Ensembl" id="ENSMUST00000022947.7">
    <molecule id="O08746-2"/>
    <property type="protein sequence ID" value="ENSMUSP00000022947.6"/>
    <property type="gene ID" value="ENSMUSG00000022324.17"/>
</dbReference>
<dbReference type="Ensembl" id="ENSMUST00000227759.2">
    <molecule id="O08746-1"/>
    <property type="protein sequence ID" value="ENSMUSP00000154040.2"/>
    <property type="gene ID" value="ENSMUSG00000022324.17"/>
</dbReference>
<dbReference type="GeneID" id="17181"/>
<dbReference type="UCSC" id="uc007vln.1">
    <molecule id="O08746-1"/>
    <property type="organism name" value="mouse"/>
</dbReference>
<dbReference type="UCSC" id="uc007vlo.1">
    <molecule id="O08746-2"/>
    <property type="organism name" value="mouse"/>
</dbReference>
<dbReference type="AGR" id="MGI:109613"/>
<dbReference type="MGI" id="MGI:109613">
    <property type="gene designation" value="Matn2"/>
</dbReference>
<dbReference type="VEuPathDB" id="HostDB:ENSMUSG00000022324"/>
<dbReference type="eggNOG" id="KOG1217">
    <property type="taxonomic scope" value="Eukaryota"/>
</dbReference>
<dbReference type="GeneTree" id="ENSGT00940000158008"/>
<dbReference type="HOGENOM" id="CLU_008905_0_0_1"/>
<dbReference type="InParanoid" id="O08746"/>
<dbReference type="OMA" id="CATEDHA"/>
<dbReference type="BioGRID-ORCS" id="17181">
    <property type="hits" value="1 hit in 78 CRISPR screens"/>
</dbReference>
<dbReference type="ChiTaRS" id="Matn2">
    <property type="organism name" value="mouse"/>
</dbReference>
<dbReference type="PRO" id="PR:O08746"/>
<dbReference type="Proteomes" id="UP000000589">
    <property type="component" value="Chromosome 15"/>
</dbReference>
<dbReference type="RNAct" id="O08746">
    <property type="molecule type" value="protein"/>
</dbReference>
<dbReference type="Bgee" id="ENSMUSG00000022324">
    <property type="expression patterns" value="Expressed in external carotid artery and 253 other cell types or tissues"/>
</dbReference>
<dbReference type="ExpressionAtlas" id="O08746">
    <property type="expression patterns" value="baseline and differential"/>
</dbReference>
<dbReference type="GO" id="GO:0005604">
    <property type="term" value="C:basement membrane"/>
    <property type="evidence" value="ECO:0000314"/>
    <property type="project" value="MGI"/>
</dbReference>
<dbReference type="GO" id="GO:0062023">
    <property type="term" value="C:collagen-containing extracellular matrix"/>
    <property type="evidence" value="ECO:0007005"/>
    <property type="project" value="BHF-UCL"/>
</dbReference>
<dbReference type="GO" id="GO:0031012">
    <property type="term" value="C:extracellular matrix"/>
    <property type="evidence" value="ECO:0000314"/>
    <property type="project" value="MGI"/>
</dbReference>
<dbReference type="GO" id="GO:0005615">
    <property type="term" value="C:extracellular space"/>
    <property type="evidence" value="ECO:0007005"/>
    <property type="project" value="BHF-UCL"/>
</dbReference>
<dbReference type="GO" id="GO:0120216">
    <property type="term" value="C:matrilin complex"/>
    <property type="evidence" value="ECO:0000353"/>
    <property type="project" value="ComplexPortal"/>
</dbReference>
<dbReference type="GO" id="GO:0005509">
    <property type="term" value="F:calcium ion binding"/>
    <property type="evidence" value="ECO:0007669"/>
    <property type="project" value="InterPro"/>
</dbReference>
<dbReference type="GO" id="GO:0007411">
    <property type="term" value="P:axon guidance"/>
    <property type="evidence" value="ECO:0000316"/>
    <property type="project" value="MGI"/>
</dbReference>
<dbReference type="GO" id="GO:0031104">
    <property type="term" value="P:dendrite regeneration"/>
    <property type="evidence" value="ECO:0000315"/>
    <property type="project" value="MGI"/>
</dbReference>
<dbReference type="GO" id="GO:0030198">
    <property type="term" value="P:extracellular matrix organization"/>
    <property type="evidence" value="ECO:0000303"/>
    <property type="project" value="ComplexPortal"/>
</dbReference>
<dbReference type="GO" id="GO:0008347">
    <property type="term" value="P:glial cell migration"/>
    <property type="evidence" value="ECO:0000314"/>
    <property type="project" value="MGI"/>
</dbReference>
<dbReference type="GO" id="GO:0001764">
    <property type="term" value="P:neuron migration"/>
    <property type="evidence" value="ECO:0000314"/>
    <property type="project" value="MGI"/>
</dbReference>
<dbReference type="GO" id="GO:0031175">
    <property type="term" value="P:neuron projection development"/>
    <property type="evidence" value="ECO:0000314"/>
    <property type="project" value="MGI"/>
</dbReference>
<dbReference type="GO" id="GO:0048678">
    <property type="term" value="P:response to axon injury"/>
    <property type="evidence" value="ECO:0000315"/>
    <property type="project" value="MGI"/>
</dbReference>
<dbReference type="CDD" id="cd01475">
    <property type="entry name" value="vWA_Matrilin"/>
    <property type="match status" value="1"/>
</dbReference>
<dbReference type="FunFam" id="3.40.50.410:FF:000004">
    <property type="entry name" value="collagen alpha-6(VI) chain"/>
    <property type="match status" value="2"/>
</dbReference>
<dbReference type="FunFam" id="2.10.25.10:FF:000292">
    <property type="entry name" value="Matrilin 2"/>
    <property type="match status" value="1"/>
</dbReference>
<dbReference type="FunFam" id="2.10.25.10:FF:000041">
    <property type="entry name" value="matrilin-2 isoform X1"/>
    <property type="match status" value="5"/>
</dbReference>
<dbReference type="FunFam" id="2.10.25.10:FF:000316">
    <property type="entry name" value="matrilin-2 isoform X2"/>
    <property type="match status" value="1"/>
</dbReference>
<dbReference type="FunFam" id="2.10.25.10:FF:000436">
    <property type="entry name" value="matrilin-2 isoform X2"/>
    <property type="match status" value="1"/>
</dbReference>
<dbReference type="FunFam" id="2.10.25.10:FF:000396">
    <property type="entry name" value="matrilin-2 isoform X3"/>
    <property type="match status" value="1"/>
</dbReference>
<dbReference type="FunFam" id="2.10.25.10:FF:000010">
    <property type="entry name" value="Pro-epidermal growth factor"/>
    <property type="match status" value="1"/>
</dbReference>
<dbReference type="Gene3D" id="1.20.5.30">
    <property type="match status" value="1"/>
</dbReference>
<dbReference type="Gene3D" id="2.10.25.10">
    <property type="entry name" value="Laminin"/>
    <property type="match status" value="10"/>
</dbReference>
<dbReference type="Gene3D" id="3.40.50.410">
    <property type="entry name" value="von Willebrand factor, type A domain"/>
    <property type="match status" value="2"/>
</dbReference>
<dbReference type="InterPro" id="IPR050525">
    <property type="entry name" value="ECM_Assembly_Org"/>
</dbReference>
<dbReference type="InterPro" id="IPR001881">
    <property type="entry name" value="EGF-like_Ca-bd_dom"/>
</dbReference>
<dbReference type="InterPro" id="IPR000742">
    <property type="entry name" value="EGF-like_dom"/>
</dbReference>
<dbReference type="InterPro" id="IPR009030">
    <property type="entry name" value="Growth_fac_rcpt_cys_sf"/>
</dbReference>
<dbReference type="InterPro" id="IPR036337">
    <property type="entry name" value="Matrilin_cc_sf"/>
</dbReference>
<dbReference type="InterPro" id="IPR019466">
    <property type="entry name" value="Matrilin_coiled-coil_trimer"/>
</dbReference>
<dbReference type="InterPro" id="IPR049883">
    <property type="entry name" value="NOTCH1_EGF-like"/>
</dbReference>
<dbReference type="InterPro" id="IPR002035">
    <property type="entry name" value="VWF_A"/>
</dbReference>
<dbReference type="InterPro" id="IPR036465">
    <property type="entry name" value="vWFA_dom_sf"/>
</dbReference>
<dbReference type="PANTHER" id="PTHR24020">
    <property type="entry name" value="COLLAGEN ALPHA"/>
    <property type="match status" value="1"/>
</dbReference>
<dbReference type="PANTHER" id="PTHR24020:SF35">
    <property type="entry name" value="MATRILIN-2"/>
    <property type="match status" value="1"/>
</dbReference>
<dbReference type="Pfam" id="PF07645">
    <property type="entry name" value="EGF_CA"/>
    <property type="match status" value="3"/>
</dbReference>
<dbReference type="Pfam" id="PF14670">
    <property type="entry name" value="FXa_inhibition"/>
    <property type="match status" value="7"/>
</dbReference>
<dbReference type="Pfam" id="PF10393">
    <property type="entry name" value="Matrilin_ccoil"/>
    <property type="match status" value="1"/>
</dbReference>
<dbReference type="Pfam" id="PF00092">
    <property type="entry name" value="VWA"/>
    <property type="match status" value="2"/>
</dbReference>
<dbReference type="PRINTS" id="PR00453">
    <property type="entry name" value="VWFADOMAIN"/>
</dbReference>
<dbReference type="SMART" id="SM00181">
    <property type="entry name" value="EGF"/>
    <property type="match status" value="10"/>
</dbReference>
<dbReference type="SMART" id="SM00179">
    <property type="entry name" value="EGF_CA"/>
    <property type="match status" value="10"/>
</dbReference>
<dbReference type="SMART" id="SM01279">
    <property type="entry name" value="Matrilin_ccoil"/>
    <property type="match status" value="1"/>
</dbReference>
<dbReference type="SMART" id="SM00327">
    <property type="entry name" value="VWA"/>
    <property type="match status" value="2"/>
</dbReference>
<dbReference type="SUPFAM" id="SSF58002">
    <property type="entry name" value="Chicken cartilage matrix protein"/>
    <property type="match status" value="1"/>
</dbReference>
<dbReference type="SUPFAM" id="SSF57184">
    <property type="entry name" value="Growth factor receptor domain"/>
    <property type="match status" value="3"/>
</dbReference>
<dbReference type="SUPFAM" id="SSF53300">
    <property type="entry name" value="vWA-like"/>
    <property type="match status" value="2"/>
</dbReference>
<dbReference type="PROSITE" id="PS00010">
    <property type="entry name" value="ASX_HYDROXYL"/>
    <property type="match status" value="7"/>
</dbReference>
<dbReference type="PROSITE" id="PS01186">
    <property type="entry name" value="EGF_2"/>
    <property type="match status" value="9"/>
</dbReference>
<dbReference type="PROSITE" id="PS50234">
    <property type="entry name" value="VWFA"/>
    <property type="match status" value="2"/>
</dbReference>
<name>MATN2_MOUSE</name>
<organism>
    <name type="scientific">Mus musculus</name>
    <name type="common">Mouse</name>
    <dbReference type="NCBI Taxonomy" id="10090"/>
    <lineage>
        <taxon>Eukaryota</taxon>
        <taxon>Metazoa</taxon>
        <taxon>Chordata</taxon>
        <taxon>Craniata</taxon>
        <taxon>Vertebrata</taxon>
        <taxon>Euteleostomi</taxon>
        <taxon>Mammalia</taxon>
        <taxon>Eutheria</taxon>
        <taxon>Euarchontoglires</taxon>
        <taxon>Glires</taxon>
        <taxon>Rodentia</taxon>
        <taxon>Myomorpha</taxon>
        <taxon>Muroidea</taxon>
        <taxon>Muridae</taxon>
        <taxon>Murinae</taxon>
        <taxon>Mus</taxon>
        <taxon>Mus</taxon>
    </lineage>
</organism>
<proteinExistence type="evidence at transcript level"/>